<gene>
    <name type="primary">LTP4.3</name>
</gene>
<evidence type="ECO:0000250" key="1"/>
<evidence type="ECO:0000255" key="2"/>
<evidence type="ECO:0000305" key="3"/>
<keyword id="KW-1015">Disulfide bond</keyword>
<keyword id="KW-0446">Lipid-binding</keyword>
<keyword id="KW-0732">Signal</keyword>
<keyword id="KW-0346">Stress response</keyword>
<keyword id="KW-0813">Transport</keyword>
<feature type="signal peptide" evidence="2">
    <location>
        <begin position="1"/>
        <end position="25"/>
    </location>
</feature>
<feature type="chain" id="PRO_0000018385" description="Non-specific lipid-transfer protein 4.3">
    <location>
        <begin position="26"/>
        <end position="115"/>
    </location>
</feature>
<feature type="disulfide bond" evidence="1">
    <location>
        <begin position="29"/>
        <end position="77"/>
    </location>
</feature>
<feature type="disulfide bond" evidence="1">
    <location>
        <begin position="39"/>
        <end position="54"/>
    </location>
</feature>
<feature type="disulfide bond" evidence="1">
    <location>
        <begin position="55"/>
        <end position="97"/>
    </location>
</feature>
<feature type="disulfide bond" evidence="1">
    <location>
        <begin position="75"/>
        <end position="111"/>
    </location>
</feature>
<comment type="function">
    <text>Plant non-specific lipid-transfer proteins transfer phospholipids as well as galactolipids across membranes. May play a role in wax or cutin deposition in the cell walls of expanding epidermal cells and certain secretory tissues.</text>
</comment>
<comment type="induction">
    <text>By cold.</text>
</comment>
<comment type="similarity">
    <text evidence="3">Belongs to the plant LTP family.</text>
</comment>
<organism>
    <name type="scientific">Hordeum vulgare</name>
    <name type="common">Barley</name>
    <dbReference type="NCBI Taxonomy" id="4513"/>
    <lineage>
        <taxon>Eukaryota</taxon>
        <taxon>Viridiplantae</taxon>
        <taxon>Streptophyta</taxon>
        <taxon>Embryophyta</taxon>
        <taxon>Tracheophyta</taxon>
        <taxon>Spermatophyta</taxon>
        <taxon>Magnoliopsida</taxon>
        <taxon>Liliopsida</taxon>
        <taxon>Poales</taxon>
        <taxon>Poaceae</taxon>
        <taxon>BOP clade</taxon>
        <taxon>Pooideae</taxon>
        <taxon>Triticodae</taxon>
        <taxon>Triticeae</taxon>
        <taxon>Hordeinae</taxon>
        <taxon>Hordeum</taxon>
    </lineage>
</organism>
<accession>Q42842</accession>
<name>NLT43_HORVU</name>
<reference key="1">
    <citation type="journal article" date="1996" name="Mol. Gen. Genet.">
        <title>Two cold-inducible genes encoding lipid transfer protein LTP4 from barley show differential responses to bacterial pathogens.</title>
        <authorList>
            <person name="Molina A."/>
            <person name="Diaz I."/>
            <person name="Vasil I.K."/>
            <person name="Carbonero P."/>
            <person name="Garcia-Olmedo F."/>
        </authorList>
    </citation>
    <scope>NUCLEOTIDE SEQUENCE [GENOMIC DNA]</scope>
    <source>
        <tissue>Leaf</tissue>
    </source>
</reference>
<sequence length="115" mass="11175">MARAAATQLVLVAMVAAMLLVATDAAISCGQVSSALSPCISYARGNGAKPPVACCSGVKRLAGAAQSTADKQAACKCIKSAAGGLNAGKAAGIPSMCGVSVPYAISASVDCSKIR</sequence>
<proteinExistence type="evidence at transcript level"/>
<dbReference type="EMBL" id="Z66528">
    <property type="protein sequence ID" value="CAA91435.1"/>
    <property type="molecule type" value="Genomic_DNA"/>
</dbReference>
<dbReference type="SMR" id="Q42842"/>
<dbReference type="OMA" id="MASIKCA"/>
<dbReference type="GO" id="GO:0008289">
    <property type="term" value="F:lipid binding"/>
    <property type="evidence" value="ECO:0007669"/>
    <property type="project" value="UniProtKB-KW"/>
</dbReference>
<dbReference type="GO" id="GO:0006869">
    <property type="term" value="P:lipid transport"/>
    <property type="evidence" value="ECO:0007669"/>
    <property type="project" value="InterPro"/>
</dbReference>
<dbReference type="CDD" id="cd01960">
    <property type="entry name" value="nsLTP1"/>
    <property type="match status" value="1"/>
</dbReference>
<dbReference type="Gene3D" id="1.10.110.10">
    <property type="entry name" value="Plant lipid-transfer and hydrophobic proteins"/>
    <property type="match status" value="1"/>
</dbReference>
<dbReference type="InterPro" id="IPR036312">
    <property type="entry name" value="Bifun_inhib/LTP/seed_sf"/>
</dbReference>
<dbReference type="InterPro" id="IPR016140">
    <property type="entry name" value="Bifunc_inhib/LTP/seed_store"/>
</dbReference>
<dbReference type="InterPro" id="IPR000528">
    <property type="entry name" value="Plant_nsLTP"/>
</dbReference>
<dbReference type="PANTHER" id="PTHR33076">
    <property type="entry name" value="NON-SPECIFIC LIPID-TRANSFER PROTEIN 2-RELATED"/>
    <property type="match status" value="1"/>
</dbReference>
<dbReference type="Pfam" id="PF00234">
    <property type="entry name" value="Tryp_alpha_amyl"/>
    <property type="match status" value="1"/>
</dbReference>
<dbReference type="PRINTS" id="PR00382">
    <property type="entry name" value="LIPIDTRNSFER"/>
</dbReference>
<dbReference type="SMART" id="SM00499">
    <property type="entry name" value="AAI"/>
    <property type="match status" value="1"/>
</dbReference>
<dbReference type="SUPFAM" id="SSF47699">
    <property type="entry name" value="Bifunctional inhibitor/lipid-transfer protein/seed storage 2S albumin"/>
    <property type="match status" value="1"/>
</dbReference>
<dbReference type="PROSITE" id="PS00597">
    <property type="entry name" value="PLANT_LTP"/>
    <property type="match status" value="1"/>
</dbReference>
<protein>
    <recommendedName>
        <fullName>Non-specific lipid-transfer protein 4.3</fullName>
        <shortName>LTP 4.3</shortName>
    </recommendedName>
</protein>